<accession>B8DAL3</accession>
<sequence>MKVIFLKDVKGKGKKGETKNVADGYANNFLIKNGYAVEANNAALSTLSAQKKKEDKLAAEELAEAKALKEKMENLTVELKAKSGEGGRLFGSITSKQIAQALEKTHGIKIDKRKMDLPEAIRALGHTKVPVKLHHEVTATLDVHVSEE</sequence>
<keyword id="KW-0687">Ribonucleoprotein</keyword>
<keyword id="KW-0689">Ribosomal protein</keyword>
<keyword id="KW-0694">RNA-binding</keyword>
<keyword id="KW-0699">rRNA-binding</keyword>
<evidence type="ECO:0000255" key="1">
    <source>
        <dbReference type="HAMAP-Rule" id="MF_00503"/>
    </source>
</evidence>
<evidence type="ECO:0000305" key="2"/>
<feature type="chain" id="PRO_1000196250" description="Large ribosomal subunit protein bL9">
    <location>
        <begin position="1"/>
        <end position="148"/>
    </location>
</feature>
<comment type="function">
    <text evidence="1">Binds to the 23S rRNA.</text>
</comment>
<comment type="similarity">
    <text evidence="1">Belongs to the bacterial ribosomal protein bL9 family.</text>
</comment>
<proteinExistence type="inferred from homology"/>
<dbReference type="EMBL" id="CP001175">
    <property type="protein sequence ID" value="ACK40952.1"/>
    <property type="molecule type" value="Genomic_DNA"/>
</dbReference>
<dbReference type="RefSeq" id="WP_003721676.1">
    <property type="nucleotide sequence ID" value="NC_011660.1"/>
</dbReference>
<dbReference type="SMR" id="B8DAL3"/>
<dbReference type="KEGG" id="lmh:LMHCC_2617"/>
<dbReference type="HOGENOM" id="CLU_078938_3_2_9"/>
<dbReference type="GO" id="GO:1990904">
    <property type="term" value="C:ribonucleoprotein complex"/>
    <property type="evidence" value="ECO:0007669"/>
    <property type="project" value="UniProtKB-KW"/>
</dbReference>
<dbReference type="GO" id="GO:0005840">
    <property type="term" value="C:ribosome"/>
    <property type="evidence" value="ECO:0007669"/>
    <property type="project" value="UniProtKB-KW"/>
</dbReference>
<dbReference type="GO" id="GO:0019843">
    <property type="term" value="F:rRNA binding"/>
    <property type="evidence" value="ECO:0007669"/>
    <property type="project" value="UniProtKB-UniRule"/>
</dbReference>
<dbReference type="GO" id="GO:0003735">
    <property type="term" value="F:structural constituent of ribosome"/>
    <property type="evidence" value="ECO:0007669"/>
    <property type="project" value="InterPro"/>
</dbReference>
<dbReference type="GO" id="GO:0006412">
    <property type="term" value="P:translation"/>
    <property type="evidence" value="ECO:0007669"/>
    <property type="project" value="UniProtKB-UniRule"/>
</dbReference>
<dbReference type="FunFam" id="3.10.430.100:FF:000002">
    <property type="entry name" value="50S ribosomal protein L9"/>
    <property type="match status" value="1"/>
</dbReference>
<dbReference type="FunFam" id="3.40.5.10:FF:000002">
    <property type="entry name" value="50S ribosomal protein L9"/>
    <property type="match status" value="1"/>
</dbReference>
<dbReference type="Gene3D" id="3.10.430.100">
    <property type="entry name" value="Ribosomal protein L9, C-terminal domain"/>
    <property type="match status" value="1"/>
</dbReference>
<dbReference type="Gene3D" id="3.40.5.10">
    <property type="entry name" value="Ribosomal protein L9, N-terminal domain"/>
    <property type="match status" value="1"/>
</dbReference>
<dbReference type="HAMAP" id="MF_00503">
    <property type="entry name" value="Ribosomal_bL9"/>
    <property type="match status" value="1"/>
</dbReference>
<dbReference type="InterPro" id="IPR000244">
    <property type="entry name" value="Ribosomal_bL9"/>
</dbReference>
<dbReference type="InterPro" id="IPR009027">
    <property type="entry name" value="Ribosomal_bL9/RNase_H1_N"/>
</dbReference>
<dbReference type="InterPro" id="IPR020594">
    <property type="entry name" value="Ribosomal_bL9_bac/chp"/>
</dbReference>
<dbReference type="InterPro" id="IPR020069">
    <property type="entry name" value="Ribosomal_bL9_C"/>
</dbReference>
<dbReference type="InterPro" id="IPR036791">
    <property type="entry name" value="Ribosomal_bL9_C_sf"/>
</dbReference>
<dbReference type="InterPro" id="IPR020070">
    <property type="entry name" value="Ribosomal_bL9_N"/>
</dbReference>
<dbReference type="InterPro" id="IPR036935">
    <property type="entry name" value="Ribosomal_bL9_N_sf"/>
</dbReference>
<dbReference type="NCBIfam" id="TIGR00158">
    <property type="entry name" value="L9"/>
    <property type="match status" value="1"/>
</dbReference>
<dbReference type="PANTHER" id="PTHR21368">
    <property type="entry name" value="50S RIBOSOMAL PROTEIN L9"/>
    <property type="match status" value="1"/>
</dbReference>
<dbReference type="Pfam" id="PF03948">
    <property type="entry name" value="Ribosomal_L9_C"/>
    <property type="match status" value="1"/>
</dbReference>
<dbReference type="Pfam" id="PF01281">
    <property type="entry name" value="Ribosomal_L9_N"/>
    <property type="match status" value="1"/>
</dbReference>
<dbReference type="SUPFAM" id="SSF55658">
    <property type="entry name" value="L9 N-domain-like"/>
    <property type="match status" value="1"/>
</dbReference>
<dbReference type="SUPFAM" id="SSF55653">
    <property type="entry name" value="Ribosomal protein L9 C-domain"/>
    <property type="match status" value="1"/>
</dbReference>
<dbReference type="PROSITE" id="PS00651">
    <property type="entry name" value="RIBOSOMAL_L9"/>
    <property type="match status" value="1"/>
</dbReference>
<gene>
    <name evidence="1" type="primary">rplI</name>
    <name type="ordered locus">LMHCC_2617</name>
</gene>
<reference key="1">
    <citation type="journal article" date="2011" name="J. Bacteriol.">
        <title>Genome sequence of lineage III Listeria monocytogenes strain HCC23.</title>
        <authorList>
            <person name="Steele C.L."/>
            <person name="Donaldson J.R."/>
            <person name="Paul D."/>
            <person name="Banes M.M."/>
            <person name="Arick T."/>
            <person name="Bridges S.M."/>
            <person name="Lawrence M.L."/>
        </authorList>
    </citation>
    <scope>NUCLEOTIDE SEQUENCE [LARGE SCALE GENOMIC DNA]</scope>
    <source>
        <strain>HCC23</strain>
    </source>
</reference>
<organism>
    <name type="scientific">Listeria monocytogenes serotype 4a (strain HCC23)</name>
    <dbReference type="NCBI Taxonomy" id="552536"/>
    <lineage>
        <taxon>Bacteria</taxon>
        <taxon>Bacillati</taxon>
        <taxon>Bacillota</taxon>
        <taxon>Bacilli</taxon>
        <taxon>Bacillales</taxon>
        <taxon>Listeriaceae</taxon>
        <taxon>Listeria</taxon>
    </lineage>
</organism>
<name>RL9_LISMH</name>
<protein>
    <recommendedName>
        <fullName evidence="1">Large ribosomal subunit protein bL9</fullName>
    </recommendedName>
    <alternativeName>
        <fullName evidence="2">50S ribosomal protein L9</fullName>
    </alternativeName>
</protein>